<name>MSHA_SACVD</name>
<organism>
    <name type="scientific">Saccharomonospora viridis (strain ATCC 15386 / DSM 43017 / JCM 3036 / CCUG 5913 / NBRC 12207 / NCIMB 9602 / P101)</name>
    <name type="common">Thermoactinomyces viridis</name>
    <dbReference type="NCBI Taxonomy" id="471857"/>
    <lineage>
        <taxon>Bacteria</taxon>
        <taxon>Bacillati</taxon>
        <taxon>Actinomycetota</taxon>
        <taxon>Actinomycetes</taxon>
        <taxon>Pseudonocardiales</taxon>
        <taxon>Pseudonocardiaceae</taxon>
        <taxon>Saccharomonospora</taxon>
    </lineage>
</organism>
<dbReference type="EC" id="2.4.1.250" evidence="1"/>
<dbReference type="EMBL" id="CP001683">
    <property type="protein sequence ID" value="ACU95347.1"/>
    <property type="molecule type" value="Genomic_DNA"/>
</dbReference>
<dbReference type="RefSeq" id="WP_012795780.1">
    <property type="nucleotide sequence ID" value="NC_013159.1"/>
</dbReference>
<dbReference type="SMR" id="C7MSY6"/>
<dbReference type="STRING" id="471857.Svir_02650"/>
<dbReference type="CAZy" id="GT4">
    <property type="family name" value="Glycosyltransferase Family 4"/>
</dbReference>
<dbReference type="KEGG" id="svi:Svir_02650"/>
<dbReference type="eggNOG" id="COG0438">
    <property type="taxonomic scope" value="Bacteria"/>
</dbReference>
<dbReference type="HOGENOM" id="CLU_009583_2_3_11"/>
<dbReference type="Proteomes" id="UP000000841">
    <property type="component" value="Chromosome"/>
</dbReference>
<dbReference type="GO" id="GO:0008375">
    <property type="term" value="F:acetylglucosaminyltransferase activity"/>
    <property type="evidence" value="ECO:0007669"/>
    <property type="project" value="UniProtKB-UniRule"/>
</dbReference>
<dbReference type="GO" id="GO:0102710">
    <property type="term" value="F:D-inositol-3-phosphate glycosyltransferase activity"/>
    <property type="evidence" value="ECO:0007669"/>
    <property type="project" value="UniProtKB-EC"/>
</dbReference>
<dbReference type="GO" id="GO:0000287">
    <property type="term" value="F:magnesium ion binding"/>
    <property type="evidence" value="ECO:0007669"/>
    <property type="project" value="UniProtKB-UniRule"/>
</dbReference>
<dbReference type="GO" id="GO:0010125">
    <property type="term" value="P:mycothiol biosynthetic process"/>
    <property type="evidence" value="ECO:0007669"/>
    <property type="project" value="UniProtKB-UniRule"/>
</dbReference>
<dbReference type="CDD" id="cd03800">
    <property type="entry name" value="GT4_sucrose_synthase"/>
    <property type="match status" value="1"/>
</dbReference>
<dbReference type="Gene3D" id="3.40.50.2000">
    <property type="entry name" value="Glycogen Phosphorylase B"/>
    <property type="match status" value="2"/>
</dbReference>
<dbReference type="HAMAP" id="MF_01695">
    <property type="entry name" value="MshA"/>
    <property type="match status" value="1"/>
</dbReference>
<dbReference type="InterPro" id="IPR001296">
    <property type="entry name" value="Glyco_trans_1"/>
</dbReference>
<dbReference type="InterPro" id="IPR028098">
    <property type="entry name" value="Glyco_trans_4-like_N"/>
</dbReference>
<dbReference type="InterPro" id="IPR050194">
    <property type="entry name" value="Glycosyltransferase_grp1"/>
</dbReference>
<dbReference type="InterPro" id="IPR017814">
    <property type="entry name" value="Mycothiol_biosynthesis_MshA"/>
</dbReference>
<dbReference type="NCBIfam" id="TIGR03449">
    <property type="entry name" value="mycothiol_MshA"/>
    <property type="match status" value="1"/>
</dbReference>
<dbReference type="PANTHER" id="PTHR45947">
    <property type="entry name" value="SULFOQUINOVOSYL TRANSFERASE SQD2"/>
    <property type="match status" value="1"/>
</dbReference>
<dbReference type="PANTHER" id="PTHR45947:SF3">
    <property type="entry name" value="SULFOQUINOVOSYL TRANSFERASE SQD2"/>
    <property type="match status" value="1"/>
</dbReference>
<dbReference type="Pfam" id="PF13579">
    <property type="entry name" value="Glyco_trans_4_4"/>
    <property type="match status" value="1"/>
</dbReference>
<dbReference type="Pfam" id="PF00534">
    <property type="entry name" value="Glycos_transf_1"/>
    <property type="match status" value="1"/>
</dbReference>
<dbReference type="SUPFAM" id="SSF53756">
    <property type="entry name" value="UDP-Glycosyltransferase/glycogen phosphorylase"/>
    <property type="match status" value="1"/>
</dbReference>
<accession>C7MSY6</accession>
<proteinExistence type="inferred from homology"/>
<evidence type="ECO:0000255" key="1">
    <source>
        <dbReference type="HAMAP-Rule" id="MF_01695"/>
    </source>
</evidence>
<sequence length="431" mass="46261">MTISGYRKAIWPRRIAVLSVHTSPLEQPGTKDAGGMNVYISQTAVEMARRGVSVEVFTRATSSDQPPAVELAPGVLVRHIPAGPFEPLERGELPSQLCAFTSGVLRTEAFQEPGYYDLIHSHYWLSGQVGWLARDRWGVPLVHTAHTLAKVKNAALASGDTPEPRTRVIGEEQVVAEADRLVVNTDVEADQLVRLYDAAPDAVRTVSPGVDLERFRPGSRAAARAALGVPADAVVLAFAGRIQPLKAPDVLLRATAALVRRDPGLRRRLVVLVAGGPSGSGLEQPRSLMDLAVELGIDDVTRFLPPQGGQDLVNVYRAADVVAVPSHNESFGLVALEAQACGTPVVAARVGGLPVAVDDEVSGLLVPTHDTEDWADALARVALRPEVRAVLSRGAREHAQRFSWRRTTDALLDIYREAMAAFRGTALEVAV</sequence>
<keyword id="KW-0328">Glycosyltransferase</keyword>
<keyword id="KW-0460">Magnesium</keyword>
<keyword id="KW-0479">Metal-binding</keyword>
<keyword id="KW-1185">Reference proteome</keyword>
<keyword id="KW-0808">Transferase</keyword>
<feature type="chain" id="PRO_0000400154" description="D-inositol 3-phosphate glycosyltransferase">
    <location>
        <begin position="1"/>
        <end position="431"/>
    </location>
</feature>
<feature type="binding site" evidence="1">
    <location>
        <position position="21"/>
    </location>
    <ligand>
        <name>1D-myo-inositol 3-phosphate</name>
        <dbReference type="ChEBI" id="CHEBI:58401"/>
    </ligand>
</feature>
<feature type="binding site" evidence="1">
    <location>
        <begin position="27"/>
        <end position="28"/>
    </location>
    <ligand>
        <name>UDP-N-acetyl-alpha-D-glucosamine</name>
        <dbReference type="ChEBI" id="CHEBI:57705"/>
    </ligand>
</feature>
<feature type="binding site" evidence="1">
    <location>
        <begin position="32"/>
        <end position="37"/>
    </location>
    <ligand>
        <name>1D-myo-inositol 3-phosphate</name>
        <dbReference type="ChEBI" id="CHEBI:58401"/>
    </ligand>
</feature>
<feature type="binding site" evidence="1">
    <location>
        <position position="35"/>
    </location>
    <ligand>
        <name>UDP-N-acetyl-alpha-D-glucosamine</name>
        <dbReference type="ChEBI" id="CHEBI:57705"/>
    </ligand>
</feature>
<feature type="binding site" evidence="1">
    <location>
        <position position="90"/>
    </location>
    <ligand>
        <name>1D-myo-inositol 3-phosphate</name>
        <dbReference type="ChEBI" id="CHEBI:58401"/>
    </ligand>
</feature>
<feature type="binding site" evidence="1">
    <location>
        <position position="123"/>
    </location>
    <ligand>
        <name>1D-myo-inositol 3-phosphate</name>
        <dbReference type="ChEBI" id="CHEBI:58401"/>
    </ligand>
</feature>
<feature type="binding site" evidence="1">
    <location>
        <position position="147"/>
    </location>
    <ligand>
        <name>1D-myo-inositol 3-phosphate</name>
        <dbReference type="ChEBI" id="CHEBI:58401"/>
    </ligand>
</feature>
<feature type="binding site" evidence="1">
    <location>
        <position position="167"/>
    </location>
    <ligand>
        <name>1D-myo-inositol 3-phosphate</name>
        <dbReference type="ChEBI" id="CHEBI:58401"/>
    </ligand>
</feature>
<feature type="binding site" evidence="1">
    <location>
        <position position="241"/>
    </location>
    <ligand>
        <name>UDP-N-acetyl-alpha-D-glucosamine</name>
        <dbReference type="ChEBI" id="CHEBI:57705"/>
    </ligand>
</feature>
<feature type="binding site" evidence="1">
    <location>
        <position position="246"/>
    </location>
    <ligand>
        <name>UDP-N-acetyl-alpha-D-glucosamine</name>
        <dbReference type="ChEBI" id="CHEBI:57705"/>
    </ligand>
</feature>
<feature type="binding site" evidence="1">
    <location>
        <position position="307"/>
    </location>
    <ligand>
        <name>UDP-N-acetyl-alpha-D-glucosamine</name>
        <dbReference type="ChEBI" id="CHEBI:57705"/>
    </ligand>
</feature>
<feature type="binding site" evidence="1">
    <location>
        <position position="316"/>
    </location>
    <ligand>
        <name>Mg(2+)</name>
        <dbReference type="ChEBI" id="CHEBI:18420"/>
    </ligand>
</feature>
<feature type="binding site" evidence="1">
    <location>
        <position position="317"/>
    </location>
    <ligand>
        <name>Mg(2+)</name>
        <dbReference type="ChEBI" id="CHEBI:18420"/>
    </ligand>
</feature>
<feature type="binding site" evidence="1">
    <location>
        <position position="319"/>
    </location>
    <ligand>
        <name>Mg(2+)</name>
        <dbReference type="ChEBI" id="CHEBI:18420"/>
    </ligand>
</feature>
<feature type="binding site" evidence="1">
    <location>
        <position position="329"/>
    </location>
    <ligand>
        <name>UDP-N-acetyl-alpha-D-glucosamine</name>
        <dbReference type="ChEBI" id="CHEBI:57705"/>
    </ligand>
</feature>
<feature type="binding site" evidence="1">
    <location>
        <position position="337"/>
    </location>
    <ligand>
        <name>UDP-N-acetyl-alpha-D-glucosamine</name>
        <dbReference type="ChEBI" id="CHEBI:57705"/>
    </ligand>
</feature>
<feature type="binding site" evidence="1">
    <location>
        <position position="343"/>
    </location>
    <ligand>
        <name>Mg(2+)</name>
        <dbReference type="ChEBI" id="CHEBI:18420"/>
    </ligand>
</feature>
<gene>
    <name evidence="1" type="primary">mshA</name>
    <name type="ordered locus">Svir_02650</name>
</gene>
<comment type="function">
    <text evidence="1">Catalyzes the transfer of a N-acetyl-glucosamine moiety to 1D-myo-inositol 3-phosphate to produce 1D-myo-inositol 2-acetamido-2-deoxy-glucopyranoside 3-phosphate in the mycothiol biosynthesis pathway.</text>
</comment>
<comment type="catalytic activity">
    <reaction evidence="1">
        <text>1D-myo-inositol 3-phosphate + UDP-N-acetyl-alpha-D-glucosamine = 1D-myo-inositol 2-acetamido-2-deoxy-alpha-D-glucopyranoside 3-phosphate + UDP + H(+)</text>
        <dbReference type="Rhea" id="RHEA:26188"/>
        <dbReference type="ChEBI" id="CHEBI:15378"/>
        <dbReference type="ChEBI" id="CHEBI:57705"/>
        <dbReference type="ChEBI" id="CHEBI:58223"/>
        <dbReference type="ChEBI" id="CHEBI:58401"/>
        <dbReference type="ChEBI" id="CHEBI:58892"/>
        <dbReference type="EC" id="2.4.1.250"/>
    </reaction>
</comment>
<comment type="subunit">
    <text evidence="1">Homodimer.</text>
</comment>
<comment type="similarity">
    <text evidence="1">Belongs to the glycosyltransferase group 1 family. MshA subfamily.</text>
</comment>
<protein>
    <recommendedName>
        <fullName>D-inositol 3-phosphate glycosyltransferase</fullName>
        <ecNumber evidence="1">2.4.1.250</ecNumber>
    </recommendedName>
    <alternativeName>
        <fullName evidence="1">N-acetylglucosamine-inositol-phosphate N-acetylglucosaminyltransferase</fullName>
        <shortName evidence="1">GlcNAc-Ins-P N-acetylglucosaminyltransferase</shortName>
    </alternativeName>
</protein>
<reference key="1">
    <citation type="journal article" date="2009" name="Stand. Genomic Sci.">
        <title>Complete genome sequence of Saccharomonospora viridis type strain (P101).</title>
        <authorList>
            <person name="Pati A."/>
            <person name="Sikorski J."/>
            <person name="Nolan M."/>
            <person name="Lapidus A."/>
            <person name="Copeland A."/>
            <person name="Glavina Del Rio T."/>
            <person name="Lucas S."/>
            <person name="Chen F."/>
            <person name="Tice H."/>
            <person name="Pitluck S."/>
            <person name="Cheng J.F."/>
            <person name="Chertkov O."/>
            <person name="Brettin T."/>
            <person name="Han C."/>
            <person name="Detter J.C."/>
            <person name="Kuske C."/>
            <person name="Bruce D."/>
            <person name="Goodwin L."/>
            <person name="Chain P."/>
            <person name="D'haeseleer P."/>
            <person name="Chen A."/>
            <person name="Palaniappan K."/>
            <person name="Ivanova N."/>
            <person name="Mavromatis K."/>
            <person name="Mikhailova N."/>
            <person name="Rohde M."/>
            <person name="Tindall B.J."/>
            <person name="Goker M."/>
            <person name="Bristow J."/>
            <person name="Eisen J.A."/>
            <person name="Markowitz V."/>
            <person name="Hugenholtz P."/>
            <person name="Kyrpides N.C."/>
            <person name="Klenk H.P."/>
        </authorList>
    </citation>
    <scope>NUCLEOTIDE SEQUENCE [LARGE SCALE GENOMIC DNA]</scope>
    <source>
        <strain>ATCC 15386 / DSM 43017 / JCM 3036 / CCUG 5913 / NBRC 12207 / NCIMB 9602 / P101</strain>
    </source>
</reference>